<proteinExistence type="inferred from homology"/>
<dbReference type="EMBL" id="AP006852">
    <property type="protein sequence ID" value="BAE44920.1"/>
    <property type="molecule type" value="Genomic_DNA"/>
</dbReference>
<dbReference type="EMBL" id="CP017629">
    <property type="protein sequence ID" value="AOW30758.1"/>
    <property type="molecule type" value="Genomic_DNA"/>
</dbReference>
<dbReference type="RefSeq" id="XP_715202.1">
    <property type="nucleotide sequence ID" value="XM_710109.1"/>
</dbReference>
<dbReference type="SMR" id="Q5A0E2"/>
<dbReference type="BioGRID" id="1226216">
    <property type="interactions" value="1"/>
</dbReference>
<dbReference type="FunCoup" id="Q5A0E2">
    <property type="interactions" value="1099"/>
</dbReference>
<dbReference type="STRING" id="237561.Q5A0E2"/>
<dbReference type="EnsemblFungi" id="C7_04200C_A-T">
    <property type="protein sequence ID" value="C7_04200C_A-T-p1"/>
    <property type="gene ID" value="C7_04200C_A"/>
</dbReference>
<dbReference type="GeneID" id="3643122"/>
<dbReference type="KEGG" id="cal:CAALFM_C704200CA"/>
<dbReference type="CGD" id="CAL0000200169">
    <property type="gene designation" value="orf19.7153"/>
</dbReference>
<dbReference type="VEuPathDB" id="FungiDB:C7_04200C_A"/>
<dbReference type="eggNOG" id="KOG2021">
    <property type="taxonomic scope" value="Eukaryota"/>
</dbReference>
<dbReference type="HOGENOM" id="CLU_004414_0_1_1"/>
<dbReference type="InParanoid" id="Q5A0E2"/>
<dbReference type="OMA" id="HEMFLFG"/>
<dbReference type="OrthoDB" id="26399at2759"/>
<dbReference type="Proteomes" id="UP000000559">
    <property type="component" value="Chromosome 7"/>
</dbReference>
<dbReference type="GO" id="GO:0005737">
    <property type="term" value="C:cytoplasm"/>
    <property type="evidence" value="ECO:0000318"/>
    <property type="project" value="GO_Central"/>
</dbReference>
<dbReference type="GO" id="GO:0016363">
    <property type="term" value="C:nuclear matrix"/>
    <property type="evidence" value="ECO:0000318"/>
    <property type="project" value="GO_Central"/>
</dbReference>
<dbReference type="GO" id="GO:0005643">
    <property type="term" value="C:nuclear pore"/>
    <property type="evidence" value="ECO:0000318"/>
    <property type="project" value="GO_Central"/>
</dbReference>
<dbReference type="GO" id="GO:0031267">
    <property type="term" value="F:small GTPase binding"/>
    <property type="evidence" value="ECO:0007669"/>
    <property type="project" value="EnsemblFungi"/>
</dbReference>
<dbReference type="GO" id="GO:0000049">
    <property type="term" value="F:tRNA binding"/>
    <property type="evidence" value="ECO:0000318"/>
    <property type="project" value="GO_Central"/>
</dbReference>
<dbReference type="GO" id="GO:0008033">
    <property type="term" value="P:tRNA processing"/>
    <property type="evidence" value="ECO:0007669"/>
    <property type="project" value="UniProtKB-KW"/>
</dbReference>
<dbReference type="GO" id="GO:0071528">
    <property type="term" value="P:tRNA re-export from nucleus"/>
    <property type="evidence" value="ECO:0000318"/>
    <property type="project" value="GO_Central"/>
</dbReference>
<dbReference type="FunFam" id="1.25.10.10:FF:001358">
    <property type="entry name" value="Exportin-T"/>
    <property type="match status" value="1"/>
</dbReference>
<dbReference type="Gene3D" id="1.25.10.10">
    <property type="entry name" value="Leucine-rich Repeat Variant"/>
    <property type="match status" value="1"/>
</dbReference>
<dbReference type="InterPro" id="IPR011989">
    <property type="entry name" value="ARM-like"/>
</dbReference>
<dbReference type="InterPro" id="IPR016024">
    <property type="entry name" value="ARM-type_fold"/>
</dbReference>
<dbReference type="InterPro" id="IPR013598">
    <property type="entry name" value="Exportin-1/Importin-b-like"/>
</dbReference>
<dbReference type="InterPro" id="IPR045546">
    <property type="entry name" value="Exportin-T_C"/>
</dbReference>
<dbReference type="InterPro" id="IPR040017">
    <property type="entry name" value="XPOT"/>
</dbReference>
<dbReference type="PANTHER" id="PTHR15952:SF11">
    <property type="entry name" value="EXPORTIN-T"/>
    <property type="match status" value="1"/>
</dbReference>
<dbReference type="PANTHER" id="PTHR15952">
    <property type="entry name" value="EXPORTIN-T/LOS1"/>
    <property type="match status" value="1"/>
</dbReference>
<dbReference type="Pfam" id="PF19282">
    <property type="entry name" value="Exportin-T"/>
    <property type="match status" value="1"/>
</dbReference>
<dbReference type="Pfam" id="PF08389">
    <property type="entry name" value="Xpo1"/>
    <property type="match status" value="1"/>
</dbReference>
<dbReference type="SUPFAM" id="SSF48371">
    <property type="entry name" value="ARM repeat"/>
    <property type="match status" value="1"/>
</dbReference>
<evidence type="ECO:0000250" key="1"/>
<evidence type="ECO:0000305" key="2"/>
<gene>
    <name type="primary">LOS1</name>
    <name type="ordered locus">CAALFM_C704200CA</name>
    <name type="ORF">CaJ7.0486</name>
    <name type="ORF">CaO19.7153</name>
</gene>
<keyword id="KW-0963">Cytoplasm</keyword>
<keyword id="KW-0539">Nucleus</keyword>
<keyword id="KW-1185">Reference proteome</keyword>
<keyword id="KW-0694">RNA-binding</keyword>
<keyword id="KW-0813">Transport</keyword>
<keyword id="KW-0819">tRNA processing</keyword>
<keyword id="KW-0820">tRNA-binding</keyword>
<accession>Q5A0E2</accession>
<accession>A0A1D8PRI5</accession>
<accession>Q3MNU0</accession>
<sequence length="1025" mass="118464">MEQQIHQAVEIALSGTADPTLKNQAFEFINHIKSTEEGYKACVDILIKSSNESINDGLKFFVYQVIDENIDKLSQEQVFTLNQELFKCLSSYINNNLQDPTHLRNKFAQILAKQFCQVYINIYPNFIKDLLELINVSEATSTNPNNLLAIDYYTRVLIGIHSEIGDKYITRSQEIHNRNNLLKDAIRTQDMQQMVTSWIQILTNPSFAHSEEILNNTLKIVGQYVSWMEISLFISPEFINTVFSFLQNSKLRNTTCETLIDIISKKMAPQNKLELLSLLNLTEFIGTLNLIEKNKNDDDDEDEDVEFMEFVAKLLNQIGQELLIVLENQSGLLEQVNAQLFKLWPAILGCLNHNYDDVSQNVFPFLQQFLTLSKKNPQLYTVDLMSTLLNKLILKMRFDDDDDGVSDEDTQAQFLDFRAKLKSFQDTIALLEPQLYLEAIPVIINESIFETNVDDVNWRKVELGLYQLNGFSDSIRNNVFQISRNEINQSKPYLIFQEFLIKLINSDLIMKINHPMIQSNFFELIVKHYNFLVSRESNFELIIKILQIFTSPLGLFNENEKVRIRSWYLFFRFIKLTKPKLDNEALIESIVVKMQPLLVIKAELPTKDEDDDIVENGNFNNQQYLFETMGLLISLIPNELSQLKSKLIDLIFQPIFNDLEKCISIPESQREPIVILQAHHSLQAIGTLVRGYDYESGLKFLPDVVAKIDNAAQVVLITLENFSSHEMIRDATRFAFARFIPIFKSDNDNNNKNNLIISQHLSKLITIIWSSSNLKISEYSDFLSFLGQIVHNFRTDDNIYQLLNNFITPLFQKIFQVLQNPVTEDENLRPDIIRDKNSLKRATLNFISSIVMNHLSSLLITESNKQELPEIIGKVFEYSYDLSDTTTSKLAIVQLTNFVNVFGGSGGKLDDKEDKYSENLPPIEGIDEFLINKVINLSFELPFQKQEFNLNDAQYRLIAQEIAILLKSFELKKHDEFIVVLSNYLLNMGLSQDLCNDFCLNLHNLDLKDFKKYFISFINKMKSGK</sequence>
<comment type="function">
    <text evidence="1">tRNA nucleus export receptor which facilitates tRNA translocation across the nuclear pore complex. Involved in pre-tRNA splicing, probably by affecting the interaction of pre-tRNA with splicing endonuclease (By similarity).</text>
</comment>
<comment type="subcellular location">
    <subcellularLocation>
        <location evidence="1">Nucleus</location>
    </subcellularLocation>
    <subcellularLocation>
        <location evidence="1">Cytoplasm</location>
    </subcellularLocation>
    <text evidence="1">Shuttles between the nucleus and the cytoplasm.</text>
</comment>
<comment type="similarity">
    <text evidence="2">Belongs to the exportin family.</text>
</comment>
<feature type="chain" id="PRO_0000343086" description="Exportin-T">
    <location>
        <begin position="1"/>
        <end position="1025"/>
    </location>
</feature>
<reference key="1">
    <citation type="journal article" date="2005" name="Genetics">
        <title>Sequence finishing and gene mapping for Candida albicans chromosome 7 and syntenic analysis against the Saccharomyces cerevisiae genome.</title>
        <authorList>
            <person name="Chibana H."/>
            <person name="Oka N."/>
            <person name="Nakayama H."/>
            <person name="Aoyama T."/>
            <person name="Magee B.B."/>
            <person name="Magee P.T."/>
            <person name="Mikami Y."/>
        </authorList>
    </citation>
    <scope>NUCLEOTIDE SEQUENCE [LARGE SCALE GENOMIC DNA]</scope>
    <source>
        <strain>SC5314 / ATCC MYA-2876</strain>
    </source>
</reference>
<reference key="2">
    <citation type="journal article" date="2004" name="Proc. Natl. Acad. Sci. U.S.A.">
        <title>The diploid genome sequence of Candida albicans.</title>
        <authorList>
            <person name="Jones T."/>
            <person name="Federspiel N.A."/>
            <person name="Chibana H."/>
            <person name="Dungan J."/>
            <person name="Kalman S."/>
            <person name="Magee B.B."/>
            <person name="Newport G."/>
            <person name="Thorstenson Y.R."/>
            <person name="Agabian N."/>
            <person name="Magee P.T."/>
            <person name="Davis R.W."/>
            <person name="Scherer S."/>
        </authorList>
    </citation>
    <scope>NUCLEOTIDE SEQUENCE [LARGE SCALE GENOMIC DNA]</scope>
    <source>
        <strain>SC5314 / ATCC MYA-2876</strain>
    </source>
</reference>
<reference key="3">
    <citation type="journal article" date="2007" name="Genome Biol.">
        <title>Assembly of the Candida albicans genome into sixteen supercontigs aligned on the eight chromosomes.</title>
        <authorList>
            <person name="van het Hoog M."/>
            <person name="Rast T.J."/>
            <person name="Martchenko M."/>
            <person name="Grindle S."/>
            <person name="Dignard D."/>
            <person name="Hogues H."/>
            <person name="Cuomo C."/>
            <person name="Berriman M."/>
            <person name="Scherer S."/>
            <person name="Magee B.B."/>
            <person name="Whiteway M."/>
            <person name="Chibana H."/>
            <person name="Nantel A."/>
            <person name="Magee P.T."/>
        </authorList>
    </citation>
    <scope>GENOME REANNOTATION</scope>
    <source>
        <strain>SC5314 / ATCC MYA-2876</strain>
    </source>
</reference>
<reference key="4">
    <citation type="journal article" date="2013" name="Genome Biol.">
        <title>Assembly of a phased diploid Candida albicans genome facilitates allele-specific measurements and provides a simple model for repeat and indel structure.</title>
        <authorList>
            <person name="Muzzey D."/>
            <person name="Schwartz K."/>
            <person name="Weissman J.S."/>
            <person name="Sherlock G."/>
        </authorList>
    </citation>
    <scope>NUCLEOTIDE SEQUENCE [LARGE SCALE GENOMIC DNA]</scope>
    <scope>GENOME REANNOTATION</scope>
    <source>
        <strain>SC5314 / ATCC MYA-2876</strain>
    </source>
</reference>
<organism>
    <name type="scientific">Candida albicans (strain SC5314 / ATCC MYA-2876)</name>
    <name type="common">Yeast</name>
    <dbReference type="NCBI Taxonomy" id="237561"/>
    <lineage>
        <taxon>Eukaryota</taxon>
        <taxon>Fungi</taxon>
        <taxon>Dikarya</taxon>
        <taxon>Ascomycota</taxon>
        <taxon>Saccharomycotina</taxon>
        <taxon>Pichiomycetes</taxon>
        <taxon>Debaryomycetaceae</taxon>
        <taxon>Candida/Lodderomyces clade</taxon>
        <taxon>Candida</taxon>
    </lineage>
</organism>
<protein>
    <recommendedName>
        <fullName>Exportin-T</fullName>
    </recommendedName>
    <alternativeName>
        <fullName>Exportin(tRNA)</fullName>
    </alternativeName>
    <alternativeName>
        <fullName>Karyopherin-beta</fullName>
    </alternativeName>
    <alternativeName>
        <fullName>tRNA exportin</fullName>
    </alternativeName>
</protein>
<name>XPOT_CANAL</name>